<sequence length="178" mass="20441">MSFSFLFLGNLPLAEGFGINTNIFETNIINLAAVVAIVISFVGKNLSALLEDRRKTIVNNLQEASQRAAEAQERLNIAKNQLEVAKKKATEIREEGVFRATQEINNCVAQHEERLSKLEEFKQETVQFYQQKAFKQAYVYIISRIMSRVKERLNKGLDATYHVVVNNFYVSRFTEYNP</sequence>
<comment type="function">
    <text evidence="1">F(1)F(0) ATP synthase produces ATP from ADP in the presence of a proton or sodium gradient. F-type ATPases consist of two structural domains, F(1) containing the extramembraneous catalytic core and F(0) containing the membrane proton channel, linked together by a central stalk and a peripheral stalk. During catalysis, ATP synthesis in the catalytic domain of F(1) is coupled via a rotary mechanism of the central stalk subunits to proton translocation.</text>
</comment>
<comment type="function">
    <text evidence="1">Component of the F(0) channel, it forms part of the peripheral stalk, linking F(1) to F(0).</text>
</comment>
<comment type="subunit">
    <text evidence="1">F-type ATPases have 2 components, F(1) - the catalytic core - and F(0) - the membrane proton channel. F(1) has five subunits: alpha(3), beta(3), gamma(1), delta(1), epsilon(1). F(0) has four main subunits: a(1), b(1), b'(1) and c(10-14). The alpha and beta chains form an alternating ring which encloses part of the gamma chain. F(1) is attached to F(0) by a central stalk formed by the gamma and epsilon chains, while a peripheral stalk is formed by the delta, b and b' chains.</text>
</comment>
<comment type="subcellular location">
    <subcellularLocation>
        <location evidence="1">Plastid</location>
        <location evidence="1">Chloroplast thylakoid membrane</location>
        <topology evidence="1">Single-pass membrane protein</topology>
    </subcellularLocation>
</comment>
<comment type="miscellaneous">
    <text>In plastids the F-type ATPase is also known as CF(1)CF(0).</text>
</comment>
<comment type="similarity">
    <text evidence="1">Belongs to the ATPase B chain family.</text>
</comment>
<gene>
    <name evidence="1" type="primary">atpF</name>
</gene>
<name>ATPF_TETOB</name>
<protein>
    <recommendedName>
        <fullName evidence="1">ATP synthase subunit b, chloroplastic</fullName>
    </recommendedName>
    <alternativeName>
        <fullName evidence="1">ATP synthase F(0) sector subunit b</fullName>
    </alternativeName>
    <alternativeName>
        <fullName evidence="1">ATPase subunit I</fullName>
    </alternativeName>
</protein>
<dbReference type="EMBL" id="DQ396875">
    <property type="protein sequence ID" value="ABD48225.1"/>
    <property type="molecule type" value="Genomic_DNA"/>
</dbReference>
<dbReference type="RefSeq" id="YP_635943.1">
    <property type="nucleotide sequence ID" value="NC_008101.1"/>
</dbReference>
<dbReference type="SMR" id="Q1KVY1"/>
<dbReference type="GeneID" id="4099793"/>
<dbReference type="GO" id="GO:0009535">
    <property type="term" value="C:chloroplast thylakoid membrane"/>
    <property type="evidence" value="ECO:0007669"/>
    <property type="project" value="UniProtKB-SubCell"/>
</dbReference>
<dbReference type="GO" id="GO:0045259">
    <property type="term" value="C:proton-transporting ATP synthase complex"/>
    <property type="evidence" value="ECO:0007669"/>
    <property type="project" value="UniProtKB-KW"/>
</dbReference>
<dbReference type="GO" id="GO:0046933">
    <property type="term" value="F:proton-transporting ATP synthase activity, rotational mechanism"/>
    <property type="evidence" value="ECO:0007669"/>
    <property type="project" value="UniProtKB-UniRule"/>
</dbReference>
<dbReference type="CDD" id="cd06503">
    <property type="entry name" value="ATP-synt_Fo_b"/>
    <property type="match status" value="1"/>
</dbReference>
<dbReference type="HAMAP" id="MF_01398">
    <property type="entry name" value="ATP_synth_b_bprime"/>
    <property type="match status" value="1"/>
</dbReference>
<dbReference type="InterPro" id="IPR002146">
    <property type="entry name" value="ATP_synth_b/b'su_bac/chlpt"/>
</dbReference>
<dbReference type="PANTHER" id="PTHR34264">
    <property type="entry name" value="ATP SYNTHASE SUBUNIT B, CHLOROPLASTIC"/>
    <property type="match status" value="1"/>
</dbReference>
<dbReference type="PANTHER" id="PTHR34264:SF3">
    <property type="entry name" value="ATP SYNTHASE SUBUNIT B, CHLOROPLASTIC"/>
    <property type="match status" value="1"/>
</dbReference>
<dbReference type="Pfam" id="PF00430">
    <property type="entry name" value="ATP-synt_B"/>
    <property type="match status" value="1"/>
</dbReference>
<reference key="1">
    <citation type="journal article" date="2006" name="BMC Evol. Biol.">
        <title>The complete chloroplast genome sequence of the chlorophycean green alga Scenedesmus obliquus reveals a compact gene organization and a biased distribution of genes on the two DNA strands.</title>
        <authorList>
            <person name="de Cambiaire J.-C."/>
            <person name="Otis C."/>
            <person name="Lemieux C."/>
            <person name="Turmel M."/>
        </authorList>
    </citation>
    <scope>NUCLEOTIDE SEQUENCE [LARGE SCALE GENOMIC DNA]</scope>
    <source>
        <strain>UTEX 393</strain>
    </source>
</reference>
<keyword id="KW-0066">ATP synthesis</keyword>
<keyword id="KW-0138">CF(0)</keyword>
<keyword id="KW-0150">Chloroplast</keyword>
<keyword id="KW-0375">Hydrogen ion transport</keyword>
<keyword id="KW-0406">Ion transport</keyword>
<keyword id="KW-0472">Membrane</keyword>
<keyword id="KW-0934">Plastid</keyword>
<keyword id="KW-0793">Thylakoid</keyword>
<keyword id="KW-0812">Transmembrane</keyword>
<keyword id="KW-1133">Transmembrane helix</keyword>
<keyword id="KW-0813">Transport</keyword>
<proteinExistence type="inferred from homology"/>
<evidence type="ECO:0000255" key="1">
    <source>
        <dbReference type="HAMAP-Rule" id="MF_01398"/>
    </source>
</evidence>
<organism>
    <name type="scientific">Tetradesmus obliquus</name>
    <name type="common">Green alga</name>
    <name type="synonym">Acutodesmus obliquus</name>
    <dbReference type="NCBI Taxonomy" id="3088"/>
    <lineage>
        <taxon>Eukaryota</taxon>
        <taxon>Viridiplantae</taxon>
        <taxon>Chlorophyta</taxon>
        <taxon>core chlorophytes</taxon>
        <taxon>Chlorophyceae</taxon>
        <taxon>CS clade</taxon>
        <taxon>Sphaeropleales</taxon>
        <taxon>Scenedesmaceae</taxon>
        <taxon>Tetradesmus</taxon>
    </lineage>
</organism>
<accession>Q1KVY1</accession>
<geneLocation type="chloroplast"/>
<feature type="chain" id="PRO_0000368978" description="ATP synthase subunit b, chloroplastic">
    <location>
        <begin position="1"/>
        <end position="178"/>
    </location>
</feature>
<feature type="transmembrane region" description="Helical" evidence="1">
    <location>
        <begin position="23"/>
        <end position="43"/>
    </location>
</feature>